<protein>
    <recommendedName>
        <fullName evidence="1">GTPase Obg</fullName>
        <ecNumber evidence="1">3.6.5.-</ecNumber>
    </recommendedName>
    <alternativeName>
        <fullName evidence="1">GTP-binding protein Obg</fullName>
    </alternativeName>
</protein>
<proteinExistence type="inferred from homology"/>
<dbReference type="EC" id="3.6.5.-" evidence="1"/>
<dbReference type="EMBL" id="CP000111">
    <property type="protein sequence ID" value="ABB49282.1"/>
    <property type="molecule type" value="Genomic_DNA"/>
</dbReference>
<dbReference type="RefSeq" id="WP_011375786.1">
    <property type="nucleotide sequence ID" value="NC_007577.1"/>
</dbReference>
<dbReference type="SMR" id="Q31CW3"/>
<dbReference type="STRING" id="74546.PMT9312_0220"/>
<dbReference type="KEGG" id="pmi:PMT9312_0220"/>
<dbReference type="eggNOG" id="COG0536">
    <property type="taxonomic scope" value="Bacteria"/>
</dbReference>
<dbReference type="HOGENOM" id="CLU_011747_2_0_3"/>
<dbReference type="OrthoDB" id="9807318at2"/>
<dbReference type="Proteomes" id="UP000002715">
    <property type="component" value="Chromosome"/>
</dbReference>
<dbReference type="GO" id="GO:0005737">
    <property type="term" value="C:cytoplasm"/>
    <property type="evidence" value="ECO:0007669"/>
    <property type="project" value="UniProtKB-SubCell"/>
</dbReference>
<dbReference type="GO" id="GO:0005524">
    <property type="term" value="F:ATP binding"/>
    <property type="evidence" value="ECO:0007669"/>
    <property type="project" value="UniProtKB-KW"/>
</dbReference>
<dbReference type="GO" id="GO:0005525">
    <property type="term" value="F:GTP binding"/>
    <property type="evidence" value="ECO:0007669"/>
    <property type="project" value="UniProtKB-UniRule"/>
</dbReference>
<dbReference type="GO" id="GO:0003924">
    <property type="term" value="F:GTPase activity"/>
    <property type="evidence" value="ECO:0007669"/>
    <property type="project" value="UniProtKB-UniRule"/>
</dbReference>
<dbReference type="GO" id="GO:0000287">
    <property type="term" value="F:magnesium ion binding"/>
    <property type="evidence" value="ECO:0007669"/>
    <property type="project" value="InterPro"/>
</dbReference>
<dbReference type="GO" id="GO:0042254">
    <property type="term" value="P:ribosome biogenesis"/>
    <property type="evidence" value="ECO:0007669"/>
    <property type="project" value="UniProtKB-UniRule"/>
</dbReference>
<dbReference type="CDD" id="cd01898">
    <property type="entry name" value="Obg"/>
    <property type="match status" value="1"/>
</dbReference>
<dbReference type="FunFam" id="2.70.210.12:FF:000001">
    <property type="entry name" value="GTPase Obg"/>
    <property type="match status" value="1"/>
</dbReference>
<dbReference type="Gene3D" id="2.70.210.12">
    <property type="entry name" value="GTP1/OBG domain"/>
    <property type="match status" value="1"/>
</dbReference>
<dbReference type="Gene3D" id="3.40.50.300">
    <property type="entry name" value="P-loop containing nucleotide triphosphate hydrolases"/>
    <property type="match status" value="1"/>
</dbReference>
<dbReference type="HAMAP" id="MF_01454">
    <property type="entry name" value="GTPase_Obg"/>
    <property type="match status" value="1"/>
</dbReference>
<dbReference type="InterPro" id="IPR031167">
    <property type="entry name" value="G_OBG"/>
</dbReference>
<dbReference type="InterPro" id="IPR006073">
    <property type="entry name" value="GTP-bd"/>
</dbReference>
<dbReference type="InterPro" id="IPR014100">
    <property type="entry name" value="GTP-bd_Obg/CgtA"/>
</dbReference>
<dbReference type="InterPro" id="IPR006169">
    <property type="entry name" value="GTP1_OBG_dom"/>
</dbReference>
<dbReference type="InterPro" id="IPR036726">
    <property type="entry name" value="GTP1_OBG_dom_sf"/>
</dbReference>
<dbReference type="InterPro" id="IPR045086">
    <property type="entry name" value="OBG_GTPase"/>
</dbReference>
<dbReference type="InterPro" id="IPR027417">
    <property type="entry name" value="P-loop_NTPase"/>
</dbReference>
<dbReference type="InterPro" id="IPR005225">
    <property type="entry name" value="Small_GTP-bd"/>
</dbReference>
<dbReference type="NCBIfam" id="TIGR02729">
    <property type="entry name" value="Obg_CgtA"/>
    <property type="match status" value="1"/>
</dbReference>
<dbReference type="NCBIfam" id="NF008955">
    <property type="entry name" value="PRK12297.1"/>
    <property type="match status" value="1"/>
</dbReference>
<dbReference type="NCBIfam" id="NF008956">
    <property type="entry name" value="PRK12299.1"/>
    <property type="match status" value="1"/>
</dbReference>
<dbReference type="NCBIfam" id="TIGR00231">
    <property type="entry name" value="small_GTP"/>
    <property type="match status" value="1"/>
</dbReference>
<dbReference type="PANTHER" id="PTHR11702">
    <property type="entry name" value="DEVELOPMENTALLY REGULATED GTP-BINDING PROTEIN-RELATED"/>
    <property type="match status" value="1"/>
</dbReference>
<dbReference type="PANTHER" id="PTHR11702:SF31">
    <property type="entry name" value="MITOCHONDRIAL RIBOSOME-ASSOCIATED GTPASE 2"/>
    <property type="match status" value="1"/>
</dbReference>
<dbReference type="Pfam" id="PF01018">
    <property type="entry name" value="GTP1_OBG"/>
    <property type="match status" value="1"/>
</dbReference>
<dbReference type="Pfam" id="PF01926">
    <property type="entry name" value="MMR_HSR1"/>
    <property type="match status" value="1"/>
</dbReference>
<dbReference type="PIRSF" id="PIRSF002401">
    <property type="entry name" value="GTP_bd_Obg/CgtA"/>
    <property type="match status" value="1"/>
</dbReference>
<dbReference type="PRINTS" id="PR00326">
    <property type="entry name" value="GTP1OBG"/>
</dbReference>
<dbReference type="SUPFAM" id="SSF82051">
    <property type="entry name" value="Obg GTP-binding protein N-terminal domain"/>
    <property type="match status" value="1"/>
</dbReference>
<dbReference type="SUPFAM" id="SSF52540">
    <property type="entry name" value="P-loop containing nucleoside triphosphate hydrolases"/>
    <property type="match status" value="1"/>
</dbReference>
<dbReference type="PROSITE" id="PS51710">
    <property type="entry name" value="G_OBG"/>
    <property type="match status" value="1"/>
</dbReference>
<dbReference type="PROSITE" id="PS51883">
    <property type="entry name" value="OBG"/>
    <property type="match status" value="1"/>
</dbReference>
<name>OBG_PROM9</name>
<reference key="1">
    <citation type="journal article" date="2006" name="Science">
        <title>Genomic islands and the ecology and evolution of Prochlorococcus.</title>
        <authorList>
            <person name="Coleman M.L."/>
            <person name="Sullivan M.B."/>
            <person name="Martiny A.C."/>
            <person name="Steglich C."/>
            <person name="Barry K."/>
            <person name="Delong E.F."/>
            <person name="Chisholm S.W."/>
        </authorList>
    </citation>
    <scope>NUCLEOTIDE SEQUENCE [LARGE SCALE GENOMIC DNA]</scope>
    <source>
        <strain>MIT 9312</strain>
    </source>
</reference>
<comment type="function">
    <text evidence="1">An essential GTPase which binds GTP, GDP and possibly (p)ppGpp with moderate affinity, with high nucleotide exchange rates and a fairly low GTP hydrolysis rate. Plays a role in control of the cell cycle, stress response, ribosome biogenesis and in those bacteria that undergo differentiation, in morphogenesis control.</text>
</comment>
<comment type="cofactor">
    <cofactor evidence="1">
        <name>Mg(2+)</name>
        <dbReference type="ChEBI" id="CHEBI:18420"/>
    </cofactor>
</comment>
<comment type="subunit">
    <text evidence="1">Monomer.</text>
</comment>
<comment type="subcellular location">
    <subcellularLocation>
        <location evidence="1">Cytoplasm</location>
    </subcellularLocation>
</comment>
<comment type="similarity">
    <text evidence="1">Belongs to the TRAFAC class OBG-HflX-like GTPase superfamily. OBG GTPase family.</text>
</comment>
<organism>
    <name type="scientific">Prochlorococcus marinus (strain MIT 9312)</name>
    <dbReference type="NCBI Taxonomy" id="74546"/>
    <lineage>
        <taxon>Bacteria</taxon>
        <taxon>Bacillati</taxon>
        <taxon>Cyanobacteriota</taxon>
        <taxon>Cyanophyceae</taxon>
        <taxon>Synechococcales</taxon>
        <taxon>Prochlorococcaceae</taxon>
        <taxon>Prochlorococcus</taxon>
    </lineage>
</organism>
<feature type="chain" id="PRO_0000386137" description="GTPase Obg">
    <location>
        <begin position="1"/>
        <end position="327"/>
    </location>
</feature>
<feature type="domain" description="Obg" evidence="2">
    <location>
        <begin position="1"/>
        <end position="159"/>
    </location>
</feature>
<feature type="domain" description="OBG-type G" evidence="1">
    <location>
        <begin position="160"/>
        <end position="327"/>
    </location>
</feature>
<feature type="binding site" evidence="1">
    <location>
        <begin position="166"/>
        <end position="173"/>
    </location>
    <ligand>
        <name>ATP</name>
        <dbReference type="ChEBI" id="CHEBI:30616"/>
    </ligand>
</feature>
<feature type="binding site" evidence="1">
    <location>
        <position position="173"/>
    </location>
    <ligand>
        <name>Mg(2+)</name>
        <dbReference type="ChEBI" id="CHEBI:18420"/>
    </ligand>
</feature>
<feature type="binding site" evidence="1">
    <location>
        <begin position="191"/>
        <end position="195"/>
    </location>
    <ligand>
        <name>ATP</name>
        <dbReference type="ChEBI" id="CHEBI:30616"/>
    </ligand>
</feature>
<feature type="binding site" evidence="1">
    <location>
        <position position="193"/>
    </location>
    <ligand>
        <name>Mg(2+)</name>
        <dbReference type="ChEBI" id="CHEBI:18420"/>
    </ligand>
</feature>
<feature type="binding site" evidence="1">
    <location>
        <begin position="213"/>
        <end position="216"/>
    </location>
    <ligand>
        <name>ATP</name>
        <dbReference type="ChEBI" id="CHEBI:30616"/>
    </ligand>
</feature>
<feature type="binding site" evidence="1">
    <location>
        <begin position="280"/>
        <end position="283"/>
    </location>
    <ligand>
        <name>ATP</name>
        <dbReference type="ChEBI" id="CHEBI:30616"/>
    </ligand>
</feature>
<feature type="binding site" evidence="1">
    <location>
        <begin position="309"/>
        <end position="311"/>
    </location>
    <ligand>
        <name>ATP</name>
        <dbReference type="ChEBI" id="CHEBI:30616"/>
    </ligand>
</feature>
<gene>
    <name evidence="1" type="primary">obg</name>
    <name type="ordered locus">PMT9312_0220</name>
</gene>
<sequence length="327" mass="35412">MQFIDQANIILKAGKGGNGIVSFRREKFVPAGGPSGGNGGRGGSIILVADNNLQTLLDFKFKREIIAEDGCKGGPNKRSGASGEDTILKVPCGTEIRDFKTGIILGDLTKNKESLTIAIGGRGGHGNAYYLSNQNRAPESFTEGQDGEIWEVQLELKLLAEVGIIGLPNAGKSTLISVLSSARPKIANYPFTTLIPNLGVVRKVDGNGCLFADIPGLISGAADGVGLGHDFLRHIQRTKILVHLIDSIAENPIHDFEIIEQELRKYGKGLIDKERIIVLNKMELVDDDYLQIITKKLEELSKKKVLAISSSLKKGLSSLLFEVWKRI</sequence>
<keyword id="KW-0067">ATP-binding</keyword>
<keyword id="KW-0963">Cytoplasm</keyword>
<keyword id="KW-0342">GTP-binding</keyword>
<keyword id="KW-0378">Hydrolase</keyword>
<keyword id="KW-0460">Magnesium</keyword>
<keyword id="KW-0479">Metal-binding</keyword>
<keyword id="KW-0547">Nucleotide-binding</keyword>
<evidence type="ECO:0000255" key="1">
    <source>
        <dbReference type="HAMAP-Rule" id="MF_01454"/>
    </source>
</evidence>
<evidence type="ECO:0000255" key="2">
    <source>
        <dbReference type="PROSITE-ProRule" id="PRU01231"/>
    </source>
</evidence>
<accession>Q31CW3</accession>